<reference key="1">
    <citation type="journal article" date="2005" name="Genome Res.">
        <title>Comparative genome sequencing of Drosophila pseudoobscura: chromosomal, gene, and cis-element evolution.</title>
        <authorList>
            <person name="Richards S."/>
            <person name="Liu Y."/>
            <person name="Bettencourt B.R."/>
            <person name="Hradecky P."/>
            <person name="Letovsky S."/>
            <person name="Nielsen R."/>
            <person name="Thornton K."/>
            <person name="Hubisz M.J."/>
            <person name="Chen R."/>
            <person name="Meisel R.P."/>
            <person name="Couronne O."/>
            <person name="Hua S."/>
            <person name="Smith M.A."/>
            <person name="Zhang P."/>
            <person name="Liu J."/>
            <person name="Bussemaker H.J."/>
            <person name="van Batenburg M.F."/>
            <person name="Howells S.L."/>
            <person name="Scherer S.E."/>
            <person name="Sodergren E."/>
            <person name="Matthews B.B."/>
            <person name="Crosby M.A."/>
            <person name="Schroeder A.J."/>
            <person name="Ortiz-Barrientos D."/>
            <person name="Rives C.M."/>
            <person name="Metzker M.L."/>
            <person name="Muzny D.M."/>
            <person name="Scott G."/>
            <person name="Steffen D."/>
            <person name="Wheeler D.A."/>
            <person name="Worley K.C."/>
            <person name="Havlak P."/>
            <person name="Durbin K.J."/>
            <person name="Egan A."/>
            <person name="Gill R."/>
            <person name="Hume J."/>
            <person name="Morgan M.B."/>
            <person name="Miner G."/>
            <person name="Hamilton C."/>
            <person name="Huang Y."/>
            <person name="Waldron L."/>
            <person name="Verduzco D."/>
            <person name="Clerc-Blankenburg K.P."/>
            <person name="Dubchak I."/>
            <person name="Noor M.A.F."/>
            <person name="Anderson W."/>
            <person name="White K.P."/>
            <person name="Clark A.G."/>
            <person name="Schaeffer S.W."/>
            <person name="Gelbart W.M."/>
            <person name="Weinstock G.M."/>
            <person name="Gibbs R.A."/>
        </authorList>
    </citation>
    <scope>NUCLEOTIDE SEQUENCE [LARGE SCALE GENOMIC DNA]</scope>
    <source>
        <strain>MV2-25 / Tucson 14011-0121.94</strain>
    </source>
</reference>
<name>GLYR1_DROPS</name>
<keyword id="KW-0158">Chromosome</keyword>
<keyword id="KW-0238">DNA-binding</keyword>
<keyword id="KW-1185">Reference proteome</keyword>
<accession>Q29NG1</accession>
<organism>
    <name type="scientific">Drosophila pseudoobscura pseudoobscura</name>
    <name type="common">Fruit fly</name>
    <dbReference type="NCBI Taxonomy" id="46245"/>
    <lineage>
        <taxon>Eukaryota</taxon>
        <taxon>Metazoa</taxon>
        <taxon>Ecdysozoa</taxon>
        <taxon>Arthropoda</taxon>
        <taxon>Hexapoda</taxon>
        <taxon>Insecta</taxon>
        <taxon>Pterygota</taxon>
        <taxon>Neoptera</taxon>
        <taxon>Endopterygota</taxon>
        <taxon>Diptera</taxon>
        <taxon>Brachycera</taxon>
        <taxon>Muscomorpha</taxon>
        <taxon>Ephydroidea</taxon>
        <taxon>Drosophilidae</taxon>
        <taxon>Drosophila</taxon>
        <taxon>Sophophora</taxon>
    </lineage>
</organism>
<protein>
    <recommendedName>
        <fullName>Cytokine-like nuclear factor N-PAC</fullName>
        <shortName>NPAC</shortName>
    </recommendedName>
    <alternativeName>
        <fullName>Glyoxylate reductase 1 homolog</fullName>
    </alternativeName>
    <alternativeName>
        <fullName>Nuclear protein NP60 homolog</fullName>
    </alternativeName>
    <alternativeName>
        <fullName>Putative oxidoreductase GLYR1 homolog</fullName>
    </alternativeName>
</protein>
<dbReference type="EMBL" id="CH379060">
    <property type="protein sequence ID" value="EAL33381.2"/>
    <property type="molecule type" value="Genomic_DNA"/>
</dbReference>
<dbReference type="SMR" id="Q29NG1"/>
<dbReference type="FunCoup" id="Q29NG1">
    <property type="interactions" value="2266"/>
</dbReference>
<dbReference type="STRING" id="46245.Q29NG1"/>
<dbReference type="EnsemblMetazoa" id="FBtr0281840">
    <property type="protein sequence ID" value="FBpp0280278"/>
    <property type="gene ID" value="FBgn0078403"/>
</dbReference>
<dbReference type="KEGG" id="dpo:4816828"/>
<dbReference type="CTD" id="192507"/>
<dbReference type="eggNOG" id="KOG0409">
    <property type="taxonomic scope" value="Eukaryota"/>
</dbReference>
<dbReference type="HOGENOM" id="CLU_018075_0_0_1"/>
<dbReference type="InParanoid" id="Q29NG1"/>
<dbReference type="OMA" id="QMISGIT"/>
<dbReference type="Proteomes" id="UP000001819">
    <property type="component" value="Chromosome 4"/>
</dbReference>
<dbReference type="Bgee" id="FBgn0078403">
    <property type="expression patterns" value="Expressed in female reproductive system and 2 other cell types or tissues"/>
</dbReference>
<dbReference type="ExpressionAtlas" id="Q29NG1">
    <property type="expression patterns" value="baseline"/>
</dbReference>
<dbReference type="GO" id="GO:0000785">
    <property type="term" value="C:chromatin"/>
    <property type="evidence" value="ECO:0007669"/>
    <property type="project" value="TreeGrafter"/>
</dbReference>
<dbReference type="GO" id="GO:0003677">
    <property type="term" value="F:DNA binding"/>
    <property type="evidence" value="ECO:0007669"/>
    <property type="project" value="UniProtKB-KW"/>
</dbReference>
<dbReference type="GO" id="GO:0051287">
    <property type="term" value="F:NAD binding"/>
    <property type="evidence" value="ECO:0007669"/>
    <property type="project" value="InterPro"/>
</dbReference>
<dbReference type="GO" id="GO:0050661">
    <property type="term" value="F:NADP binding"/>
    <property type="evidence" value="ECO:0007669"/>
    <property type="project" value="InterPro"/>
</dbReference>
<dbReference type="GO" id="GO:0031491">
    <property type="term" value="F:nucleosome binding"/>
    <property type="evidence" value="ECO:0007669"/>
    <property type="project" value="TreeGrafter"/>
</dbReference>
<dbReference type="GO" id="GO:0140673">
    <property type="term" value="P:transcription elongation-coupled chromatin remodeling"/>
    <property type="evidence" value="ECO:0007669"/>
    <property type="project" value="TreeGrafter"/>
</dbReference>
<dbReference type="CDD" id="cd05836">
    <property type="entry name" value="PWWP_GLYR1"/>
    <property type="match status" value="1"/>
</dbReference>
<dbReference type="FunFam" id="1.10.1040.10:FF:000039">
    <property type="entry name" value="Blast:Putative oxidoreductase GLYR1 homolog"/>
    <property type="match status" value="1"/>
</dbReference>
<dbReference type="FunFam" id="3.40.50.720:FF:000058">
    <property type="entry name" value="Putative oxidoreductase GLYR1 homolog"/>
    <property type="match status" value="1"/>
</dbReference>
<dbReference type="Gene3D" id="2.30.30.140">
    <property type="match status" value="1"/>
</dbReference>
<dbReference type="Gene3D" id="1.10.1040.10">
    <property type="entry name" value="N-(1-d-carboxylethyl)-l-norvaline Dehydrogenase, domain 2"/>
    <property type="match status" value="1"/>
</dbReference>
<dbReference type="Gene3D" id="3.40.50.720">
    <property type="entry name" value="NAD(P)-binding Rossmann-like Domain"/>
    <property type="match status" value="1"/>
</dbReference>
<dbReference type="InterPro" id="IPR008927">
    <property type="entry name" value="6-PGluconate_DH-like_C_sf"/>
</dbReference>
<dbReference type="InterPro" id="IPR013328">
    <property type="entry name" value="6PGD_dom2"/>
</dbReference>
<dbReference type="InterPro" id="IPR006115">
    <property type="entry name" value="6PGDH_NADP-bd"/>
</dbReference>
<dbReference type="InterPro" id="IPR035501">
    <property type="entry name" value="GLYR1_PWWP"/>
</dbReference>
<dbReference type="InterPro" id="IPR029154">
    <property type="entry name" value="HIBADH-like_NADP-bd"/>
</dbReference>
<dbReference type="InterPro" id="IPR051265">
    <property type="entry name" value="HIBADH-related_NP60_sf"/>
</dbReference>
<dbReference type="InterPro" id="IPR036291">
    <property type="entry name" value="NAD(P)-bd_dom_sf"/>
</dbReference>
<dbReference type="InterPro" id="IPR000313">
    <property type="entry name" value="PWWP_dom"/>
</dbReference>
<dbReference type="PANTHER" id="PTHR43580:SF2">
    <property type="entry name" value="CYTOKINE-LIKE NUCLEAR FACTOR N-PAC"/>
    <property type="match status" value="1"/>
</dbReference>
<dbReference type="PANTHER" id="PTHR43580">
    <property type="entry name" value="OXIDOREDUCTASE GLYR1-RELATED"/>
    <property type="match status" value="1"/>
</dbReference>
<dbReference type="Pfam" id="PF14833">
    <property type="entry name" value="NAD_binding_11"/>
    <property type="match status" value="1"/>
</dbReference>
<dbReference type="Pfam" id="PF03446">
    <property type="entry name" value="NAD_binding_2"/>
    <property type="match status" value="1"/>
</dbReference>
<dbReference type="Pfam" id="PF00855">
    <property type="entry name" value="PWWP"/>
    <property type="match status" value="1"/>
</dbReference>
<dbReference type="SMART" id="SM00293">
    <property type="entry name" value="PWWP"/>
    <property type="match status" value="1"/>
</dbReference>
<dbReference type="SUPFAM" id="SSF48179">
    <property type="entry name" value="6-phosphogluconate dehydrogenase C-terminal domain-like"/>
    <property type="match status" value="1"/>
</dbReference>
<dbReference type="SUPFAM" id="SSF51735">
    <property type="entry name" value="NAD(P)-binding Rossmann-fold domains"/>
    <property type="match status" value="1"/>
</dbReference>
<dbReference type="SUPFAM" id="SSF63748">
    <property type="entry name" value="Tudor/PWWP/MBT"/>
    <property type="match status" value="1"/>
</dbReference>
<dbReference type="PROSITE" id="PS50812">
    <property type="entry name" value="PWWP"/>
    <property type="match status" value="1"/>
</dbReference>
<proteinExistence type="inferred from homology"/>
<evidence type="ECO:0000250" key="1">
    <source>
        <dbReference type="UniProtKB" id="Q49A26"/>
    </source>
</evidence>
<evidence type="ECO:0000250" key="2">
    <source>
        <dbReference type="UniProtKB" id="Q8T079"/>
    </source>
</evidence>
<evidence type="ECO:0000255" key="3">
    <source>
        <dbReference type="PROSITE-ProRule" id="PRU00162"/>
    </source>
</evidence>
<evidence type="ECO:0000256" key="4">
    <source>
        <dbReference type="SAM" id="MobiDB-lite"/>
    </source>
</evidence>
<evidence type="ECO:0000305" key="5"/>
<gene>
    <name type="ORF">GA18401</name>
</gene>
<comment type="function">
    <text evidence="1 2">Nucleosome-destabilizing factor that is recruited to genes during transcriptional activation and colocalizes with a subset of trimethylated 'Lys-36' histone H3 (H3K36me3)-enriched regions. Binds DNA (in vitro). Facilitates Pol II transcription through nucleosomes. Facilitates male-specific lethal (MSL) histone acetyltransferase complex targeting to active genes on the X chromosome. Stimulates the acetylation of 'Lys-56' of nucleosomal histone H3 (H3K56ac) by nej (By similarity).</text>
</comment>
<comment type="subunit">
    <text evidence="2">Binds to mononucleosomes. Interacts with male-specific lethal (MSL) histone acetyltransferase complex at least composed of mof, msl-1, msl-2 and msl-3.</text>
</comment>
<comment type="subcellular location">
    <subcellularLocation>
        <location evidence="2">Chromosome</location>
    </subcellularLocation>
    <text evidence="2">Localization to open chromatin depends on H3K36 trimethylation by Set2.</text>
</comment>
<comment type="domain">
    <text evidence="1">The PWWP domain is a H3 reader and strongly binds DNA.</text>
</comment>
<comment type="domain">
    <text evidence="1">In the dehydrogenase domain, the conserved NAD(P)H-binding sites and sequence similarity to plant dehydrogenases suggest that this protein may have oxidoreductase activity. However, since the active site is not conserved, the dehydrogenase domain seems to serve as a catalytically inert oligomerization module.</text>
</comment>
<comment type="similarity">
    <text evidence="5">Belongs to the HIBADH-related family. NP60 subfamily.</text>
</comment>
<sequence length="612" mass="66209">MSKNKKMSLSGGDTTEKFIYKPKDLIWAKMKGFTPWPGMIVEPPLDLLTQQRRANTKCVFFFGSRNFAWIEENNIKPFEGPWKEELAKVSKPAAFRHAMADIDKYIDDPAEVDDQINESCGVPNHATEADFDKIRDAVDSDENAVDADADANNGVVVHVVGSPDVSEAVEGENNADSSASPTVTAATPATAKSPAKRTPKAKPVSAVSATKAAKASTTKSAQKRRISAHQTPTGANTSGLPNAKRGKRVVSGGATPGNFDGASSSSPTARRRVEVDDLLASLAAKRAPNAIALLDRPVVTRPETQAIDMNSRSNTLADRDIVPSELTFGFLGLGMMGSTIVKDLIYTGHKVVVWNRTIDKCQPFVEAGAEVKDTPMDVVEAADIIFCCVSDPKGAKDLVFGNCGVLQLKDLRNKAYVEMSTVDPDTSLDIGEGIKQCNGRYLEAQIHGSRQEAADGMLIILAGGDRTVFEECHSCFKTIAKNTFFLGNVGNACKVNLILQTIQAVSLVGLAEALALADRFSISLNDIIDIFDLTSMKSPLLLAKGKEMAKGDFNPQQPLSHMQRDLRLVLNMAENLDQSMPVTSITNEVFKHTKRLGYSEHDSSAVFVRSRF</sequence>
<feature type="chain" id="PRO_0000312131" description="Cytokine-like nuclear factor N-PAC">
    <location>
        <begin position="1"/>
        <end position="612"/>
    </location>
</feature>
<feature type="domain" description="PWWP" evidence="3">
    <location>
        <begin position="22"/>
        <end position="81"/>
    </location>
</feature>
<feature type="region of interest" description="Disordered" evidence="4">
    <location>
        <begin position="168"/>
        <end position="270"/>
    </location>
</feature>
<feature type="region of interest" description="Interaction with histone H3" evidence="1">
    <location>
        <begin position="276"/>
        <end position="279"/>
    </location>
</feature>
<feature type="region of interest" description="Dehydrogenase domain" evidence="1">
    <location>
        <begin position="319"/>
        <end position="612"/>
    </location>
</feature>
<feature type="compositionally biased region" description="Low complexity" evidence="4">
    <location>
        <begin position="177"/>
        <end position="193"/>
    </location>
</feature>
<feature type="compositionally biased region" description="Low complexity" evidence="4">
    <location>
        <begin position="201"/>
        <end position="220"/>
    </location>
</feature>
<feature type="compositionally biased region" description="Polar residues" evidence="4">
    <location>
        <begin position="228"/>
        <end position="240"/>
    </location>
</feature>
<feature type="binding site" evidence="1">
    <location>
        <begin position="329"/>
        <end position="343"/>
    </location>
    <ligand>
        <name>NAD(+)</name>
        <dbReference type="ChEBI" id="CHEBI:57540"/>
    </ligand>
</feature>
<feature type="binding site" evidence="1">
    <location>
        <position position="421"/>
    </location>
    <ligand>
        <name>NAD(+)</name>
        <dbReference type="ChEBI" id="CHEBI:57540"/>
    </ligand>
</feature>
<feature type="binding site" evidence="1">
    <location>
        <position position="564"/>
    </location>
    <ligand>
        <name>NAD(+)</name>
        <dbReference type="ChEBI" id="CHEBI:57540"/>
    </ligand>
</feature>